<protein>
    <recommendedName>
        <fullName>ATP-dependent RNA helicase DDX55</fullName>
        <ecNumber evidence="1">3.6.4.13</ecNumber>
    </recommendedName>
    <alternativeName>
        <fullName>DEAD box protein 55</fullName>
    </alternativeName>
</protein>
<comment type="function">
    <text evidence="1">Probable ATP-binding RNA helicase. Has ATPase activity and is involved in the maturation of precursor large subunit rRNAs (By similarity).</text>
</comment>
<comment type="catalytic activity">
    <reaction evidence="1">
        <text>ATP + H2O = ADP + phosphate + H(+)</text>
        <dbReference type="Rhea" id="RHEA:13065"/>
        <dbReference type="ChEBI" id="CHEBI:15377"/>
        <dbReference type="ChEBI" id="CHEBI:15378"/>
        <dbReference type="ChEBI" id="CHEBI:30616"/>
        <dbReference type="ChEBI" id="CHEBI:43474"/>
        <dbReference type="ChEBI" id="CHEBI:456216"/>
        <dbReference type="EC" id="3.6.4.13"/>
    </reaction>
</comment>
<comment type="subunit">
    <text evidence="1">Interacts with 28S rRNA. Interacts with double-stranded RNA substrates in vitro; the interaction stimulates ATPase activity.</text>
</comment>
<comment type="subcellular location">
    <subcellularLocation>
        <location evidence="1">Nucleus</location>
        <location evidence="1">Nucleoplasm</location>
    </subcellularLocation>
</comment>
<comment type="domain">
    <text>The Q motif is unique to and characteristic of the DEAD box family of RNA helicases and controls ATP binding and hydrolysis.</text>
</comment>
<comment type="domain">
    <text evidence="1">The C-terminal region is required for DDX55 nuclear import and association with pre-ribosomal complexes.</text>
</comment>
<comment type="similarity">
    <text evidence="5">Belongs to the DEAD box helicase family. DDX55/SPB4 subfamily.</text>
</comment>
<comment type="sequence caution" evidence="5">
    <conflict type="erroneous initiation">
        <sequence resource="EMBL-CDS" id="BAC98212"/>
    </conflict>
</comment>
<comment type="sequence caution" evidence="5">
    <conflict type="erroneous initiation">
        <sequence resource="EMBL-CDS" id="BAE32574"/>
    </conflict>
</comment>
<accession>Q6ZPL9</accession>
<accession>Q149H5</accession>
<accession>Q3U460</accession>
<accession>Q8BZR1</accession>
<proteinExistence type="evidence at protein level"/>
<reference key="1">
    <citation type="journal article" date="2003" name="DNA Res.">
        <title>Prediction of the coding sequences of mouse homologues of KIAA gene: III. The complete nucleotide sequences of 500 mouse KIAA-homologous cDNAs identified by screening of terminal sequences of cDNA clones randomly sampled from size-fractionated libraries.</title>
        <authorList>
            <person name="Okazaki N."/>
            <person name="Kikuno R."/>
            <person name="Ohara R."/>
            <person name="Inamoto S."/>
            <person name="Koseki H."/>
            <person name="Hiraoka S."/>
            <person name="Saga Y."/>
            <person name="Nagase T."/>
            <person name="Ohara O."/>
            <person name="Koga H."/>
        </authorList>
    </citation>
    <scope>NUCLEOTIDE SEQUENCE [LARGE SCALE MRNA]</scope>
    <source>
        <tissue>Embryonic tail</tissue>
    </source>
</reference>
<reference key="2">
    <citation type="journal article" date="2005" name="Science">
        <title>The transcriptional landscape of the mammalian genome.</title>
        <authorList>
            <person name="Carninci P."/>
            <person name="Kasukawa T."/>
            <person name="Katayama S."/>
            <person name="Gough J."/>
            <person name="Frith M.C."/>
            <person name="Maeda N."/>
            <person name="Oyama R."/>
            <person name="Ravasi T."/>
            <person name="Lenhard B."/>
            <person name="Wells C."/>
            <person name="Kodzius R."/>
            <person name="Shimokawa K."/>
            <person name="Bajic V.B."/>
            <person name="Brenner S.E."/>
            <person name="Batalov S."/>
            <person name="Forrest A.R."/>
            <person name="Zavolan M."/>
            <person name="Davis M.J."/>
            <person name="Wilming L.G."/>
            <person name="Aidinis V."/>
            <person name="Allen J.E."/>
            <person name="Ambesi-Impiombato A."/>
            <person name="Apweiler R."/>
            <person name="Aturaliya R.N."/>
            <person name="Bailey T.L."/>
            <person name="Bansal M."/>
            <person name="Baxter L."/>
            <person name="Beisel K.W."/>
            <person name="Bersano T."/>
            <person name="Bono H."/>
            <person name="Chalk A.M."/>
            <person name="Chiu K.P."/>
            <person name="Choudhary V."/>
            <person name="Christoffels A."/>
            <person name="Clutterbuck D.R."/>
            <person name="Crowe M.L."/>
            <person name="Dalla E."/>
            <person name="Dalrymple B.P."/>
            <person name="de Bono B."/>
            <person name="Della Gatta G."/>
            <person name="di Bernardo D."/>
            <person name="Down T."/>
            <person name="Engstrom P."/>
            <person name="Fagiolini M."/>
            <person name="Faulkner G."/>
            <person name="Fletcher C.F."/>
            <person name="Fukushima T."/>
            <person name="Furuno M."/>
            <person name="Futaki S."/>
            <person name="Gariboldi M."/>
            <person name="Georgii-Hemming P."/>
            <person name="Gingeras T.R."/>
            <person name="Gojobori T."/>
            <person name="Green R.E."/>
            <person name="Gustincich S."/>
            <person name="Harbers M."/>
            <person name="Hayashi Y."/>
            <person name="Hensch T.K."/>
            <person name="Hirokawa N."/>
            <person name="Hill D."/>
            <person name="Huminiecki L."/>
            <person name="Iacono M."/>
            <person name="Ikeo K."/>
            <person name="Iwama A."/>
            <person name="Ishikawa T."/>
            <person name="Jakt M."/>
            <person name="Kanapin A."/>
            <person name="Katoh M."/>
            <person name="Kawasawa Y."/>
            <person name="Kelso J."/>
            <person name="Kitamura H."/>
            <person name="Kitano H."/>
            <person name="Kollias G."/>
            <person name="Krishnan S.P."/>
            <person name="Kruger A."/>
            <person name="Kummerfeld S.K."/>
            <person name="Kurochkin I.V."/>
            <person name="Lareau L.F."/>
            <person name="Lazarevic D."/>
            <person name="Lipovich L."/>
            <person name="Liu J."/>
            <person name="Liuni S."/>
            <person name="McWilliam S."/>
            <person name="Madan Babu M."/>
            <person name="Madera M."/>
            <person name="Marchionni L."/>
            <person name="Matsuda H."/>
            <person name="Matsuzawa S."/>
            <person name="Miki H."/>
            <person name="Mignone F."/>
            <person name="Miyake S."/>
            <person name="Morris K."/>
            <person name="Mottagui-Tabar S."/>
            <person name="Mulder N."/>
            <person name="Nakano N."/>
            <person name="Nakauchi H."/>
            <person name="Ng P."/>
            <person name="Nilsson R."/>
            <person name="Nishiguchi S."/>
            <person name="Nishikawa S."/>
            <person name="Nori F."/>
            <person name="Ohara O."/>
            <person name="Okazaki Y."/>
            <person name="Orlando V."/>
            <person name="Pang K.C."/>
            <person name="Pavan W.J."/>
            <person name="Pavesi G."/>
            <person name="Pesole G."/>
            <person name="Petrovsky N."/>
            <person name="Piazza S."/>
            <person name="Reed J."/>
            <person name="Reid J.F."/>
            <person name="Ring B.Z."/>
            <person name="Ringwald M."/>
            <person name="Rost B."/>
            <person name="Ruan Y."/>
            <person name="Salzberg S.L."/>
            <person name="Sandelin A."/>
            <person name="Schneider C."/>
            <person name="Schoenbach C."/>
            <person name="Sekiguchi K."/>
            <person name="Semple C.A."/>
            <person name="Seno S."/>
            <person name="Sessa L."/>
            <person name="Sheng Y."/>
            <person name="Shibata Y."/>
            <person name="Shimada H."/>
            <person name="Shimada K."/>
            <person name="Silva D."/>
            <person name="Sinclair B."/>
            <person name="Sperling S."/>
            <person name="Stupka E."/>
            <person name="Sugiura K."/>
            <person name="Sultana R."/>
            <person name="Takenaka Y."/>
            <person name="Taki K."/>
            <person name="Tammoja K."/>
            <person name="Tan S.L."/>
            <person name="Tang S."/>
            <person name="Taylor M.S."/>
            <person name="Tegner J."/>
            <person name="Teichmann S.A."/>
            <person name="Ueda H.R."/>
            <person name="van Nimwegen E."/>
            <person name="Verardo R."/>
            <person name="Wei C.L."/>
            <person name="Yagi K."/>
            <person name="Yamanishi H."/>
            <person name="Zabarovsky E."/>
            <person name="Zhu S."/>
            <person name="Zimmer A."/>
            <person name="Hide W."/>
            <person name="Bult C."/>
            <person name="Grimmond S.M."/>
            <person name="Teasdale R.D."/>
            <person name="Liu E.T."/>
            <person name="Brusic V."/>
            <person name="Quackenbush J."/>
            <person name="Wahlestedt C."/>
            <person name="Mattick J.S."/>
            <person name="Hume D.A."/>
            <person name="Kai C."/>
            <person name="Sasaki D."/>
            <person name="Tomaru Y."/>
            <person name="Fukuda S."/>
            <person name="Kanamori-Katayama M."/>
            <person name="Suzuki M."/>
            <person name="Aoki J."/>
            <person name="Arakawa T."/>
            <person name="Iida J."/>
            <person name="Imamura K."/>
            <person name="Itoh M."/>
            <person name="Kato T."/>
            <person name="Kawaji H."/>
            <person name="Kawagashira N."/>
            <person name="Kawashima T."/>
            <person name="Kojima M."/>
            <person name="Kondo S."/>
            <person name="Konno H."/>
            <person name="Nakano K."/>
            <person name="Ninomiya N."/>
            <person name="Nishio T."/>
            <person name="Okada M."/>
            <person name="Plessy C."/>
            <person name="Shibata K."/>
            <person name="Shiraki T."/>
            <person name="Suzuki S."/>
            <person name="Tagami M."/>
            <person name="Waki K."/>
            <person name="Watahiki A."/>
            <person name="Okamura-Oho Y."/>
            <person name="Suzuki H."/>
            <person name="Kawai J."/>
            <person name="Hayashizaki Y."/>
        </authorList>
    </citation>
    <scope>NUCLEOTIDE SEQUENCE [LARGE SCALE MRNA]</scope>
    <source>
        <strain>C57BL/6J</strain>
        <strain>NOD</strain>
        <tissue>Cecum</tissue>
    </source>
</reference>
<reference key="3">
    <citation type="journal article" date="2004" name="Genome Res.">
        <title>The status, quality, and expansion of the NIH full-length cDNA project: the Mammalian Gene Collection (MGC).</title>
        <authorList>
            <consortium name="The MGC Project Team"/>
        </authorList>
    </citation>
    <scope>NUCLEOTIDE SEQUENCE [LARGE SCALE MRNA]</scope>
</reference>
<reference key="4">
    <citation type="journal article" date="2007" name="Proc. Natl. Acad. Sci. U.S.A.">
        <title>Large-scale phosphorylation analysis of mouse liver.</title>
        <authorList>
            <person name="Villen J."/>
            <person name="Beausoleil S.A."/>
            <person name="Gerber S.A."/>
            <person name="Gygi S.P."/>
        </authorList>
    </citation>
    <scope>PHOSPHORYLATION [LARGE SCALE ANALYSIS] AT SER-544 AND SER-594</scope>
    <scope>IDENTIFICATION BY MASS SPECTROMETRY [LARGE SCALE ANALYSIS]</scope>
    <source>
        <tissue>Liver</tissue>
    </source>
</reference>
<reference key="5">
    <citation type="journal article" date="2010" name="Cell">
        <title>A tissue-specific atlas of mouse protein phosphorylation and expression.</title>
        <authorList>
            <person name="Huttlin E.L."/>
            <person name="Jedrychowski M.P."/>
            <person name="Elias J.E."/>
            <person name="Goswami T."/>
            <person name="Rad R."/>
            <person name="Beausoleil S.A."/>
            <person name="Villen J."/>
            <person name="Haas W."/>
            <person name="Sowa M.E."/>
            <person name="Gygi S.P."/>
        </authorList>
    </citation>
    <scope>PHOSPHORYLATION [LARGE SCALE ANALYSIS] AT SER-544 AND SER-594</scope>
    <scope>IDENTIFICATION BY MASS SPECTROMETRY [LARGE SCALE ANALYSIS]</scope>
    <source>
        <tissue>Kidney</tissue>
        <tissue>Liver</tissue>
        <tissue>Lung</tissue>
        <tissue>Pancreas</tissue>
        <tissue>Spleen</tissue>
    </source>
</reference>
<evidence type="ECO:0000250" key="1">
    <source>
        <dbReference type="UniProtKB" id="Q8NHQ9"/>
    </source>
</evidence>
<evidence type="ECO:0000255" key="2">
    <source>
        <dbReference type="PROSITE-ProRule" id="PRU00541"/>
    </source>
</evidence>
<evidence type="ECO:0000255" key="3">
    <source>
        <dbReference type="PROSITE-ProRule" id="PRU00542"/>
    </source>
</evidence>
<evidence type="ECO:0000256" key="4">
    <source>
        <dbReference type="SAM" id="MobiDB-lite"/>
    </source>
</evidence>
<evidence type="ECO:0000305" key="5"/>
<evidence type="ECO:0007744" key="6">
    <source>
    </source>
</evidence>
<evidence type="ECO:0007744" key="7">
    <source>
    </source>
</evidence>
<name>DDX55_MOUSE</name>
<dbReference type="EC" id="3.6.4.13" evidence="1"/>
<dbReference type="EMBL" id="AK129402">
    <property type="protein sequence ID" value="BAC98212.1"/>
    <property type="status" value="ALT_INIT"/>
    <property type="molecule type" value="mRNA"/>
</dbReference>
<dbReference type="EMBL" id="AK033741">
    <property type="protein sequence ID" value="BAC28459.1"/>
    <property type="molecule type" value="mRNA"/>
</dbReference>
<dbReference type="EMBL" id="AK154422">
    <property type="protein sequence ID" value="BAE32574.1"/>
    <property type="status" value="ALT_INIT"/>
    <property type="molecule type" value="mRNA"/>
</dbReference>
<dbReference type="EMBL" id="BC117786">
    <property type="protein sequence ID" value="AAI17787.1"/>
    <property type="molecule type" value="mRNA"/>
</dbReference>
<dbReference type="EMBL" id="BC117787">
    <property type="protein sequence ID" value="AAI17788.1"/>
    <property type="molecule type" value="mRNA"/>
</dbReference>
<dbReference type="CCDS" id="CCDS39281.1"/>
<dbReference type="RefSeq" id="NP_080685.2">
    <property type="nucleotide sequence ID" value="NM_026409.4"/>
</dbReference>
<dbReference type="SMR" id="Q6ZPL9"/>
<dbReference type="BioGRID" id="212478">
    <property type="interactions" value="1"/>
</dbReference>
<dbReference type="FunCoup" id="Q6ZPL9">
    <property type="interactions" value="4378"/>
</dbReference>
<dbReference type="IntAct" id="Q6ZPL9">
    <property type="interactions" value="2"/>
</dbReference>
<dbReference type="STRING" id="10090.ENSMUSP00000070279"/>
<dbReference type="GlyGen" id="Q6ZPL9">
    <property type="glycosylation" value="2 sites, 1 N-linked glycan (1 site), 1 O-linked glycan (1 site)"/>
</dbReference>
<dbReference type="iPTMnet" id="Q6ZPL9"/>
<dbReference type="PhosphoSitePlus" id="Q6ZPL9"/>
<dbReference type="jPOST" id="Q6ZPL9"/>
<dbReference type="PaxDb" id="10090-ENSMUSP00000070279"/>
<dbReference type="PeptideAtlas" id="Q6ZPL9"/>
<dbReference type="ProteomicsDB" id="277971"/>
<dbReference type="Pumba" id="Q6ZPL9"/>
<dbReference type="Antibodypedia" id="19284">
    <property type="antibodies" value="162 antibodies from 25 providers"/>
</dbReference>
<dbReference type="DNASU" id="67848"/>
<dbReference type="Ensembl" id="ENSMUST00000071057.14">
    <property type="protein sequence ID" value="ENSMUSP00000070279.8"/>
    <property type="gene ID" value="ENSMUSG00000029389.18"/>
</dbReference>
<dbReference type="GeneID" id="67848"/>
<dbReference type="KEGG" id="mmu:67848"/>
<dbReference type="UCSC" id="uc008zqc.2">
    <property type="organism name" value="mouse"/>
</dbReference>
<dbReference type="AGR" id="MGI:1915098"/>
<dbReference type="CTD" id="57696"/>
<dbReference type="MGI" id="MGI:1915098">
    <property type="gene designation" value="Ddx55"/>
</dbReference>
<dbReference type="VEuPathDB" id="HostDB:ENSMUSG00000029389"/>
<dbReference type="eggNOG" id="KOG0331">
    <property type="taxonomic scope" value="Eukaryota"/>
</dbReference>
<dbReference type="eggNOG" id="KOG0345">
    <property type="taxonomic scope" value="Eukaryota"/>
</dbReference>
<dbReference type="GeneTree" id="ENSGT00550000074969"/>
<dbReference type="InParanoid" id="Q6ZPL9"/>
<dbReference type="OMA" id="AYKEHEC"/>
<dbReference type="OrthoDB" id="7396459at2759"/>
<dbReference type="PhylomeDB" id="Q6ZPL9"/>
<dbReference type="TreeFam" id="TF314573"/>
<dbReference type="BioGRID-ORCS" id="67848">
    <property type="hits" value="27 hits in 83 CRISPR screens"/>
</dbReference>
<dbReference type="ChiTaRS" id="Ddx55">
    <property type="organism name" value="mouse"/>
</dbReference>
<dbReference type="PRO" id="PR:Q6ZPL9"/>
<dbReference type="Proteomes" id="UP000000589">
    <property type="component" value="Chromosome 5"/>
</dbReference>
<dbReference type="RNAct" id="Q6ZPL9">
    <property type="molecule type" value="protein"/>
</dbReference>
<dbReference type="Bgee" id="ENSMUSG00000029389">
    <property type="expression patterns" value="Expressed in retinal neural layer and 154 other cell types or tissues"/>
</dbReference>
<dbReference type="ExpressionAtlas" id="Q6ZPL9">
    <property type="expression patterns" value="baseline and differential"/>
</dbReference>
<dbReference type="GO" id="GO:0005829">
    <property type="term" value="C:cytosol"/>
    <property type="evidence" value="ECO:0007669"/>
    <property type="project" value="Ensembl"/>
</dbReference>
<dbReference type="GO" id="GO:0005730">
    <property type="term" value="C:nucleolus"/>
    <property type="evidence" value="ECO:0007669"/>
    <property type="project" value="Ensembl"/>
</dbReference>
<dbReference type="GO" id="GO:0005654">
    <property type="term" value="C:nucleoplasm"/>
    <property type="evidence" value="ECO:0007669"/>
    <property type="project" value="Ensembl"/>
</dbReference>
<dbReference type="GO" id="GO:0005524">
    <property type="term" value="F:ATP binding"/>
    <property type="evidence" value="ECO:0007669"/>
    <property type="project" value="UniProtKB-KW"/>
</dbReference>
<dbReference type="GO" id="GO:0016887">
    <property type="term" value="F:ATP hydrolysis activity"/>
    <property type="evidence" value="ECO:0007669"/>
    <property type="project" value="RHEA"/>
</dbReference>
<dbReference type="GO" id="GO:0003723">
    <property type="term" value="F:RNA binding"/>
    <property type="evidence" value="ECO:0007669"/>
    <property type="project" value="UniProtKB-KW"/>
</dbReference>
<dbReference type="GO" id="GO:0003724">
    <property type="term" value="F:RNA helicase activity"/>
    <property type="evidence" value="ECO:0007669"/>
    <property type="project" value="UniProtKB-EC"/>
</dbReference>
<dbReference type="CDD" id="cd17960">
    <property type="entry name" value="DEADc_DDX55"/>
    <property type="match status" value="1"/>
</dbReference>
<dbReference type="CDD" id="cd18787">
    <property type="entry name" value="SF2_C_DEAD"/>
    <property type="match status" value="1"/>
</dbReference>
<dbReference type="FunFam" id="3.40.50.300:FF:000877">
    <property type="entry name" value="RNA helicase"/>
    <property type="match status" value="1"/>
</dbReference>
<dbReference type="FunFam" id="3.40.50.300:FF:001022">
    <property type="entry name" value="RNA helicase"/>
    <property type="match status" value="1"/>
</dbReference>
<dbReference type="Gene3D" id="3.40.50.300">
    <property type="entry name" value="P-loop containing nucleotide triphosphate hydrolases"/>
    <property type="match status" value="2"/>
</dbReference>
<dbReference type="InterPro" id="IPR011545">
    <property type="entry name" value="DEAD/DEAH_box_helicase_dom"/>
</dbReference>
<dbReference type="InterPro" id="IPR014001">
    <property type="entry name" value="Helicase_ATP-bd"/>
</dbReference>
<dbReference type="InterPro" id="IPR001650">
    <property type="entry name" value="Helicase_C-like"/>
</dbReference>
<dbReference type="InterPro" id="IPR027417">
    <property type="entry name" value="P-loop_NTPase"/>
</dbReference>
<dbReference type="InterPro" id="IPR000629">
    <property type="entry name" value="RNA-helicase_DEAD-box_CS"/>
</dbReference>
<dbReference type="InterPro" id="IPR014014">
    <property type="entry name" value="RNA_helicase_DEAD_Q_motif"/>
</dbReference>
<dbReference type="InterPro" id="IPR025313">
    <property type="entry name" value="SPB4-like_CTE"/>
</dbReference>
<dbReference type="PANTHER" id="PTHR24031">
    <property type="entry name" value="RNA HELICASE"/>
    <property type="match status" value="1"/>
</dbReference>
<dbReference type="Pfam" id="PF13959">
    <property type="entry name" value="CTE_SPB4"/>
    <property type="match status" value="1"/>
</dbReference>
<dbReference type="Pfam" id="PF00270">
    <property type="entry name" value="DEAD"/>
    <property type="match status" value="1"/>
</dbReference>
<dbReference type="Pfam" id="PF00271">
    <property type="entry name" value="Helicase_C"/>
    <property type="match status" value="1"/>
</dbReference>
<dbReference type="SMART" id="SM00487">
    <property type="entry name" value="DEXDc"/>
    <property type="match status" value="1"/>
</dbReference>
<dbReference type="SMART" id="SM01178">
    <property type="entry name" value="DUF4217"/>
    <property type="match status" value="1"/>
</dbReference>
<dbReference type="SMART" id="SM00490">
    <property type="entry name" value="HELICc"/>
    <property type="match status" value="1"/>
</dbReference>
<dbReference type="SUPFAM" id="SSF52540">
    <property type="entry name" value="P-loop containing nucleoside triphosphate hydrolases"/>
    <property type="match status" value="1"/>
</dbReference>
<dbReference type="PROSITE" id="PS00039">
    <property type="entry name" value="DEAD_ATP_HELICASE"/>
    <property type="match status" value="1"/>
</dbReference>
<dbReference type="PROSITE" id="PS51192">
    <property type="entry name" value="HELICASE_ATP_BIND_1"/>
    <property type="match status" value="1"/>
</dbReference>
<dbReference type="PROSITE" id="PS51194">
    <property type="entry name" value="HELICASE_CTER"/>
    <property type="match status" value="1"/>
</dbReference>
<dbReference type="PROSITE" id="PS51195">
    <property type="entry name" value="Q_MOTIF"/>
    <property type="match status" value="1"/>
</dbReference>
<sequence>MEHVTEGAWESLQVPLHPRVLGALRELGFPHMTPVQSATIPLFMKNKDVAAEAVTGSGKTLAFVIPILEILLRREEKLKKNQVGAIVITPTRELAIQIDEVLSHFTKHFPQFSQILWIGGRNPGEDVERFKQHGGNIIVATPGRLEDMFRRKAEGLDLASCVKSLDVLVLDEADRLLDMGFEASINTILEFLPKQRRTGLFSATQTQEVENLVRAGLRNPVRISVKEKGVAASSTQKTPSRLENHYMICKADEKFNQLVHFLRSRQQEKHLVFFSTCACVEYYGKALEALLKKVKILCIHGKMKYKRNKIFMEFRKLQSGILVCTDVMARGIDIPEVNWVLQYDPPSNASAFVHRCGRTARIGHGGSALVFLLPMEEAYINFLAINQKCPLQEMSLQRNTIDLLPKLRAMALADRAVFEKGMKAFVSFVQAYAKHECSLIFRLKDLDFAGLARGFALLRMPRMPELRGKQFPDFVPVDIDTDTIPFKDKIREKQRQKLLEQKRKERSENEGRKKFIKNKAWSKQKAKKERKKKMNAKRKKDEGSDIDDEDMEELLNDTRLLKKFKKGKITEEEFEKGLLTSAKRTVQLTDLGVSDLEEDS</sequence>
<keyword id="KW-0067">ATP-binding</keyword>
<keyword id="KW-0347">Helicase</keyword>
<keyword id="KW-0378">Hydrolase</keyword>
<keyword id="KW-0547">Nucleotide-binding</keyword>
<keyword id="KW-0539">Nucleus</keyword>
<keyword id="KW-0597">Phosphoprotein</keyword>
<keyword id="KW-1185">Reference proteome</keyword>
<keyword id="KW-0690">Ribosome biogenesis</keyword>
<keyword id="KW-0694">RNA-binding</keyword>
<keyword id="KW-0698">rRNA processing</keyword>
<keyword id="KW-0699">rRNA-binding</keyword>
<organism>
    <name type="scientific">Mus musculus</name>
    <name type="common">Mouse</name>
    <dbReference type="NCBI Taxonomy" id="10090"/>
    <lineage>
        <taxon>Eukaryota</taxon>
        <taxon>Metazoa</taxon>
        <taxon>Chordata</taxon>
        <taxon>Craniata</taxon>
        <taxon>Vertebrata</taxon>
        <taxon>Euteleostomi</taxon>
        <taxon>Mammalia</taxon>
        <taxon>Eutheria</taxon>
        <taxon>Euarchontoglires</taxon>
        <taxon>Glires</taxon>
        <taxon>Rodentia</taxon>
        <taxon>Myomorpha</taxon>
        <taxon>Muroidea</taxon>
        <taxon>Muridae</taxon>
        <taxon>Murinae</taxon>
        <taxon>Mus</taxon>
        <taxon>Mus</taxon>
    </lineage>
</organism>
<gene>
    <name type="primary">Ddx55</name>
    <name type="synonym">Kiaa1595</name>
</gene>
<feature type="chain" id="PRO_0000252211" description="ATP-dependent RNA helicase DDX55">
    <location>
        <begin position="1"/>
        <end position="600"/>
    </location>
</feature>
<feature type="domain" description="Helicase ATP-binding" evidence="2">
    <location>
        <begin position="40"/>
        <end position="223"/>
    </location>
</feature>
<feature type="domain" description="Helicase C-terminal" evidence="3">
    <location>
        <begin position="254"/>
        <end position="402"/>
    </location>
</feature>
<feature type="region of interest" description="Disordered" evidence="4">
    <location>
        <begin position="499"/>
        <end position="551"/>
    </location>
</feature>
<feature type="region of interest" description="Important for nuclear localization" evidence="1">
    <location>
        <begin position="533"/>
        <end position="562"/>
    </location>
</feature>
<feature type="short sequence motif" description="Q motif">
    <location>
        <begin position="9"/>
        <end position="37"/>
    </location>
</feature>
<feature type="short sequence motif" description="DEAD box">
    <location>
        <begin position="171"/>
        <end position="174"/>
    </location>
</feature>
<feature type="compositionally biased region" description="Basic and acidic residues" evidence="4">
    <location>
        <begin position="499"/>
        <end position="513"/>
    </location>
</feature>
<feature type="compositionally biased region" description="Basic residues" evidence="4">
    <location>
        <begin position="514"/>
        <end position="538"/>
    </location>
</feature>
<feature type="binding site" evidence="2">
    <location>
        <begin position="53"/>
        <end position="60"/>
    </location>
    <ligand>
        <name>ATP</name>
        <dbReference type="ChEBI" id="CHEBI:30616"/>
    </ligand>
</feature>
<feature type="modified residue" description="Phosphoserine" evidence="6 7">
    <location>
        <position position="544"/>
    </location>
</feature>
<feature type="modified residue" description="Phosphoserine" evidence="6 7">
    <location>
        <position position="594"/>
    </location>
</feature>
<feature type="sequence conflict" description="In Ref. 3; AAI17787/AAI17788." evidence="5" ref="3">
    <original>D</original>
    <variation>H</variation>
    <location>
        <position position="482"/>
    </location>
</feature>